<gene>
    <name type="primary">CPYA</name>
    <name type="ORF">BC1G_03711</name>
    <name type="ORF">BCIN_10g04320</name>
</gene>
<evidence type="ECO:0000250" key="1"/>
<evidence type="ECO:0000255" key="2"/>
<evidence type="ECO:0000255" key="3">
    <source>
        <dbReference type="PROSITE-ProRule" id="PRU10074"/>
    </source>
</evidence>
<evidence type="ECO:0000255" key="4">
    <source>
        <dbReference type="PROSITE-ProRule" id="PRU10075"/>
    </source>
</evidence>
<evidence type="ECO:0000305" key="5"/>
<organism>
    <name type="scientific">Botryotinia fuckeliana (strain B05.10)</name>
    <name type="common">Noble rot fungus</name>
    <name type="synonym">Botrytis cinerea</name>
    <dbReference type="NCBI Taxonomy" id="332648"/>
    <lineage>
        <taxon>Eukaryota</taxon>
        <taxon>Fungi</taxon>
        <taxon>Dikarya</taxon>
        <taxon>Ascomycota</taxon>
        <taxon>Pezizomycotina</taxon>
        <taxon>Leotiomycetes</taxon>
        <taxon>Helotiales</taxon>
        <taxon>Sclerotiniaceae</taxon>
        <taxon>Botrytis</taxon>
    </lineage>
</organism>
<sequence length="546" mass="60852">MKLLASTVLVGAAAASITPQQQVLQNPFKSATKPVSDAWSKSMESLGHLTGSMKGMTAEAKAIWDEVSMLFPEAMEKAAFFSEPKPHTRKPDSTWDYIVKGADIQSVWVENSKGEKEREIDGKLEQYNLRAKKVDPSKLGVDTVKQYSGYLDDEEDDKHLFYWFFESRNDPKNDPVVLWLNGGPGCSSLTGLFLELGPSSIDKNLKLHNNPYSWNANASVIFLDQPVNVGYSYSGSSVSNTVAAGKDVYALLTLFFKQFPEYAKQDFHIAGESYAGHYIPVFTSEILSHKKRNINLKSVLIGNGLTDGLTQYEHYRPMACGDGGWPAVLGASECQAMDNALPRCQSLIQNCYDSESVWSCVPASIYCNNAMMGPYQRTGQNVYDVRGKCEDTSNLCYSALGWISEFLNKADVQKELGVEVSSYDSCNFDINRNFLFQGDWMKPFHRLVPGILEQIPVLIYAGDADFICNWLGNQAWTDALEWPGKKDFNAAKTKDLQLESGHKTGTFKSSGNFTFARIFGAGHMVPMDQPEASLDFLNKWLNDYTL</sequence>
<reference key="1">
    <citation type="journal article" date="2011" name="PLoS Genet.">
        <title>Genomic analysis of the necrotrophic fungal pathogens Sclerotinia sclerotiorum and Botrytis cinerea.</title>
        <authorList>
            <person name="Amselem J."/>
            <person name="Cuomo C.A."/>
            <person name="van Kan J.A.L."/>
            <person name="Viaud M."/>
            <person name="Benito E.P."/>
            <person name="Couloux A."/>
            <person name="Coutinho P.M."/>
            <person name="de Vries R.P."/>
            <person name="Dyer P.S."/>
            <person name="Fillinger S."/>
            <person name="Fournier E."/>
            <person name="Gout L."/>
            <person name="Hahn M."/>
            <person name="Kohn L."/>
            <person name="Lapalu N."/>
            <person name="Plummer K.M."/>
            <person name="Pradier J.-M."/>
            <person name="Quevillon E."/>
            <person name="Sharon A."/>
            <person name="Simon A."/>
            <person name="ten Have A."/>
            <person name="Tudzynski B."/>
            <person name="Tudzynski P."/>
            <person name="Wincker P."/>
            <person name="Andrew M."/>
            <person name="Anthouard V."/>
            <person name="Beever R.E."/>
            <person name="Beffa R."/>
            <person name="Benoit I."/>
            <person name="Bouzid O."/>
            <person name="Brault B."/>
            <person name="Chen Z."/>
            <person name="Choquer M."/>
            <person name="Collemare J."/>
            <person name="Cotton P."/>
            <person name="Danchin E.G."/>
            <person name="Da Silva C."/>
            <person name="Gautier A."/>
            <person name="Giraud C."/>
            <person name="Giraud T."/>
            <person name="Gonzalez C."/>
            <person name="Grossetete S."/>
            <person name="Gueldener U."/>
            <person name="Henrissat B."/>
            <person name="Howlett B.J."/>
            <person name="Kodira C."/>
            <person name="Kretschmer M."/>
            <person name="Lappartient A."/>
            <person name="Leroch M."/>
            <person name="Levis C."/>
            <person name="Mauceli E."/>
            <person name="Neuveglise C."/>
            <person name="Oeser B."/>
            <person name="Pearson M."/>
            <person name="Poulain J."/>
            <person name="Poussereau N."/>
            <person name="Quesneville H."/>
            <person name="Rascle C."/>
            <person name="Schumacher J."/>
            <person name="Segurens B."/>
            <person name="Sexton A."/>
            <person name="Silva E."/>
            <person name="Sirven C."/>
            <person name="Soanes D.M."/>
            <person name="Talbot N.J."/>
            <person name="Templeton M."/>
            <person name="Yandava C."/>
            <person name="Yarden O."/>
            <person name="Zeng Q."/>
            <person name="Rollins J.A."/>
            <person name="Lebrun M.-H."/>
            <person name="Dickman M."/>
        </authorList>
    </citation>
    <scope>NUCLEOTIDE SEQUENCE [LARGE SCALE GENOMIC DNA]</scope>
    <source>
        <strain>B05.10</strain>
    </source>
</reference>
<reference key="2">
    <citation type="journal article" date="2012" name="Eukaryot. Cell">
        <title>Genome update of Botrytis cinerea strains B05.10 and T4.</title>
        <authorList>
            <person name="Staats M."/>
            <person name="van Kan J.A.L."/>
        </authorList>
    </citation>
    <scope>NUCLEOTIDE SEQUENCE [LARGE SCALE GENOMIC DNA]</scope>
    <scope>GENOME REANNOTATION</scope>
    <source>
        <strain>B05.10</strain>
    </source>
</reference>
<reference key="3">
    <citation type="journal article" date="2017" name="Mol. Plant Pathol.">
        <title>A gapless genome sequence of the fungus Botrytis cinerea.</title>
        <authorList>
            <person name="van Kan J.A.L."/>
            <person name="Stassen J.H.M."/>
            <person name="Mosbach A."/>
            <person name="van der Lee T.A.J."/>
            <person name="Faino L."/>
            <person name="Farmer A.D."/>
            <person name="Papasotiriou D.G."/>
            <person name="Zhou S."/>
            <person name="Seidl M.F."/>
            <person name="Cottam E."/>
            <person name="Edel D."/>
            <person name="Hahn M."/>
            <person name="Schwartz D.C."/>
            <person name="Dietrich R.A."/>
            <person name="Widdison S."/>
            <person name="Scalliet G."/>
        </authorList>
    </citation>
    <scope>NUCLEOTIDE SEQUENCE [LARGE SCALE GENOMIC DNA]</scope>
    <scope>GENOME REANNOTATION</scope>
    <source>
        <strain>B05.10</strain>
    </source>
</reference>
<dbReference type="EC" id="3.4.16.5"/>
<dbReference type="EMBL" id="CP009814">
    <property type="protein sequence ID" value="ATZ54429.1"/>
    <property type="molecule type" value="Genomic_DNA"/>
</dbReference>
<dbReference type="SMR" id="A6RUD7"/>
<dbReference type="ESTHER" id="botfb-cbpya">
    <property type="family name" value="Carboxypeptidase_S10"/>
</dbReference>
<dbReference type="MEROPS" id="S10.001"/>
<dbReference type="GlyCosmos" id="A6RUD7">
    <property type="glycosylation" value="2 sites, No reported glycans"/>
</dbReference>
<dbReference type="EnsemblFungi" id="Bcin10g04320.1">
    <property type="protein sequence ID" value="Bcin10p04320.1"/>
    <property type="gene ID" value="Bcin10g04320"/>
</dbReference>
<dbReference type="GeneID" id="5438040"/>
<dbReference type="KEGG" id="bfu:BCIN_10g04320"/>
<dbReference type="VEuPathDB" id="FungiDB:Bcin10g04320"/>
<dbReference type="OMA" id="GDWMKPF"/>
<dbReference type="OrthoDB" id="443318at2759"/>
<dbReference type="Proteomes" id="UP000001798">
    <property type="component" value="Chromosome bcin10"/>
</dbReference>
<dbReference type="GO" id="GO:0000324">
    <property type="term" value="C:fungal-type vacuole"/>
    <property type="evidence" value="ECO:0007669"/>
    <property type="project" value="TreeGrafter"/>
</dbReference>
<dbReference type="GO" id="GO:0004185">
    <property type="term" value="F:serine-type carboxypeptidase activity"/>
    <property type="evidence" value="ECO:0007669"/>
    <property type="project" value="UniProtKB-EC"/>
</dbReference>
<dbReference type="GO" id="GO:0006508">
    <property type="term" value="P:proteolysis"/>
    <property type="evidence" value="ECO:0007669"/>
    <property type="project" value="UniProtKB-KW"/>
</dbReference>
<dbReference type="FunFam" id="1.10.287.410:FF:000001">
    <property type="entry name" value="Carboxypeptidase Y"/>
    <property type="match status" value="1"/>
</dbReference>
<dbReference type="Gene3D" id="1.10.287.410">
    <property type="match status" value="1"/>
</dbReference>
<dbReference type="Gene3D" id="3.40.50.1820">
    <property type="entry name" value="alpha/beta hydrolase"/>
    <property type="match status" value="1"/>
</dbReference>
<dbReference type="InterPro" id="IPR029058">
    <property type="entry name" value="AB_hydrolase_fold"/>
</dbReference>
<dbReference type="InterPro" id="IPR001563">
    <property type="entry name" value="Peptidase_S10"/>
</dbReference>
<dbReference type="InterPro" id="IPR008442">
    <property type="entry name" value="Propeptide_carboxypepY"/>
</dbReference>
<dbReference type="InterPro" id="IPR033124">
    <property type="entry name" value="Ser_caboxypep_his_AS"/>
</dbReference>
<dbReference type="InterPro" id="IPR018202">
    <property type="entry name" value="Ser_caboxypep_ser_AS"/>
</dbReference>
<dbReference type="PANTHER" id="PTHR11802:SF113">
    <property type="entry name" value="SERINE CARBOXYPEPTIDASE CTSA-4.1"/>
    <property type="match status" value="1"/>
</dbReference>
<dbReference type="PANTHER" id="PTHR11802">
    <property type="entry name" value="SERINE PROTEASE FAMILY S10 SERINE CARBOXYPEPTIDASE"/>
    <property type="match status" value="1"/>
</dbReference>
<dbReference type="Pfam" id="PF05388">
    <property type="entry name" value="Carbpep_Y_N"/>
    <property type="match status" value="1"/>
</dbReference>
<dbReference type="Pfam" id="PF00450">
    <property type="entry name" value="Peptidase_S10"/>
    <property type="match status" value="1"/>
</dbReference>
<dbReference type="PRINTS" id="PR00724">
    <property type="entry name" value="CRBOXYPTASEC"/>
</dbReference>
<dbReference type="SUPFAM" id="SSF53474">
    <property type="entry name" value="alpha/beta-Hydrolases"/>
    <property type="match status" value="1"/>
</dbReference>
<dbReference type="PROSITE" id="PS00560">
    <property type="entry name" value="CARBOXYPEPT_SER_HIS"/>
    <property type="match status" value="1"/>
</dbReference>
<dbReference type="PROSITE" id="PS00131">
    <property type="entry name" value="CARBOXYPEPT_SER_SER"/>
    <property type="match status" value="1"/>
</dbReference>
<comment type="function">
    <text evidence="1">Vacuolar carboxypeptidase involved in degradation of small peptides. Digests preferentially peptides containing an aliphatic or hydrophobic residue in P1' position, as well as methionine, leucine or phenylalanine in P1 position of ester substrate (By similarity).</text>
</comment>
<comment type="catalytic activity">
    <reaction evidence="3 4">
        <text>Release of a C-terminal amino acid with broad specificity.</text>
        <dbReference type="EC" id="3.4.16.5"/>
    </reaction>
</comment>
<comment type="subcellular location">
    <subcellularLocation>
        <location evidence="1">Vacuole</location>
    </subcellularLocation>
</comment>
<comment type="similarity">
    <text evidence="5">Belongs to the peptidase S10 family.</text>
</comment>
<name>CBPYA_BOTFB</name>
<keyword id="KW-0121">Carboxypeptidase</keyword>
<keyword id="KW-1015">Disulfide bond</keyword>
<keyword id="KW-0325">Glycoprotein</keyword>
<keyword id="KW-0378">Hydrolase</keyword>
<keyword id="KW-0645">Protease</keyword>
<keyword id="KW-1185">Reference proteome</keyword>
<keyword id="KW-0732">Signal</keyword>
<keyword id="KW-0926">Vacuole</keyword>
<keyword id="KW-0865">Zymogen</keyword>
<protein>
    <recommendedName>
        <fullName>Carboxypeptidase Y homolog A</fullName>
        <ecNumber>3.4.16.5</ecNumber>
    </recommendedName>
</protein>
<proteinExistence type="inferred from homology"/>
<feature type="signal peptide" evidence="2">
    <location>
        <begin position="1"/>
        <end position="17"/>
    </location>
</feature>
<feature type="propeptide" id="PRO_0000407441" evidence="1">
    <location>
        <begin position="18"/>
        <end position="132"/>
    </location>
</feature>
<feature type="chain" id="PRO_0000407442" description="Carboxypeptidase Y homolog A">
    <location>
        <begin position="133"/>
        <end position="546"/>
    </location>
</feature>
<feature type="active site" evidence="1">
    <location>
        <position position="273"/>
    </location>
</feature>
<feature type="active site" evidence="1">
    <location>
        <position position="465"/>
    </location>
</feature>
<feature type="active site" evidence="1">
    <location>
        <position position="523"/>
    </location>
</feature>
<feature type="glycosylation site" description="N-linked (GlcNAc...) asparagine" evidence="2">
    <location>
        <position position="217"/>
    </location>
</feature>
<feature type="glycosylation site" description="N-linked (GlcNAc...) asparagine" evidence="2">
    <location>
        <position position="512"/>
    </location>
</feature>
<feature type="disulfide bond" evidence="1">
    <location>
        <begin position="186"/>
        <end position="426"/>
    </location>
</feature>
<feature type="disulfide bond" evidence="1">
    <location>
        <begin position="320"/>
        <end position="334"/>
    </location>
</feature>
<feature type="disulfide bond" evidence="1">
    <location>
        <begin position="344"/>
        <end position="367"/>
    </location>
</feature>
<feature type="disulfide bond" evidence="1">
    <location>
        <begin position="351"/>
        <end position="360"/>
    </location>
</feature>
<feature type="disulfide bond" evidence="1">
    <location>
        <begin position="389"/>
        <end position="396"/>
    </location>
</feature>
<accession>A6RUD7</accession>
<accession>A0A384JUZ5</accession>